<protein>
    <recommendedName>
        <fullName evidence="1">tRNA N6-adenosine threonylcarbamoyltransferase</fullName>
        <ecNumber evidence="1">2.3.1.234</ecNumber>
    </recommendedName>
    <alternativeName>
        <fullName evidence="1">N6-L-threonylcarbamoyladenine synthase</fullName>
        <shortName evidence="1">t(6)A synthase</shortName>
    </alternativeName>
    <alternativeName>
        <fullName evidence="1">t(6)A37 threonylcarbamoyladenosine biosynthesis protein TsaD</fullName>
    </alternativeName>
    <alternativeName>
        <fullName evidence="1">tRNA threonylcarbamoyladenosine biosynthesis protein TsaD</fullName>
    </alternativeName>
</protein>
<accession>A5G3X1</accession>
<keyword id="KW-0012">Acyltransferase</keyword>
<keyword id="KW-0963">Cytoplasm</keyword>
<keyword id="KW-0408">Iron</keyword>
<keyword id="KW-0479">Metal-binding</keyword>
<keyword id="KW-1185">Reference proteome</keyword>
<keyword id="KW-0808">Transferase</keyword>
<keyword id="KW-0819">tRNA processing</keyword>
<reference key="1">
    <citation type="submission" date="2007-05" db="EMBL/GenBank/DDBJ databases">
        <title>Complete sequence of Geobacter uraniireducens Rf4.</title>
        <authorList>
            <consortium name="US DOE Joint Genome Institute"/>
            <person name="Copeland A."/>
            <person name="Lucas S."/>
            <person name="Lapidus A."/>
            <person name="Barry K."/>
            <person name="Detter J.C."/>
            <person name="Glavina del Rio T."/>
            <person name="Hammon N."/>
            <person name="Israni S."/>
            <person name="Dalin E."/>
            <person name="Tice H."/>
            <person name="Pitluck S."/>
            <person name="Chertkov O."/>
            <person name="Brettin T."/>
            <person name="Bruce D."/>
            <person name="Han C."/>
            <person name="Schmutz J."/>
            <person name="Larimer F."/>
            <person name="Land M."/>
            <person name="Hauser L."/>
            <person name="Kyrpides N."/>
            <person name="Mikhailova N."/>
            <person name="Shelobolina E."/>
            <person name="Aklujkar M."/>
            <person name="Lovley D."/>
            <person name="Richardson P."/>
        </authorList>
    </citation>
    <scope>NUCLEOTIDE SEQUENCE [LARGE SCALE GENOMIC DNA]</scope>
    <source>
        <strain>ATCC BAA-1134 / JCM 13001 / Rf4</strain>
    </source>
</reference>
<name>TSAD_GEOUR</name>
<proteinExistence type="inferred from homology"/>
<dbReference type="EC" id="2.3.1.234" evidence="1"/>
<dbReference type="EMBL" id="CP000698">
    <property type="protein sequence ID" value="ABQ26489.1"/>
    <property type="molecule type" value="Genomic_DNA"/>
</dbReference>
<dbReference type="RefSeq" id="WP_011939183.1">
    <property type="nucleotide sequence ID" value="NC_009483.1"/>
</dbReference>
<dbReference type="SMR" id="A5G3X1"/>
<dbReference type="STRING" id="351605.Gura_2310"/>
<dbReference type="KEGG" id="gur:Gura_2310"/>
<dbReference type="HOGENOM" id="CLU_023208_0_2_7"/>
<dbReference type="OrthoDB" id="9806197at2"/>
<dbReference type="Proteomes" id="UP000006695">
    <property type="component" value="Chromosome"/>
</dbReference>
<dbReference type="GO" id="GO:0005737">
    <property type="term" value="C:cytoplasm"/>
    <property type="evidence" value="ECO:0007669"/>
    <property type="project" value="UniProtKB-SubCell"/>
</dbReference>
<dbReference type="GO" id="GO:0005506">
    <property type="term" value="F:iron ion binding"/>
    <property type="evidence" value="ECO:0007669"/>
    <property type="project" value="UniProtKB-UniRule"/>
</dbReference>
<dbReference type="GO" id="GO:0061711">
    <property type="term" value="F:N(6)-L-threonylcarbamoyladenine synthase activity"/>
    <property type="evidence" value="ECO:0007669"/>
    <property type="project" value="UniProtKB-EC"/>
</dbReference>
<dbReference type="GO" id="GO:0002949">
    <property type="term" value="P:tRNA threonylcarbamoyladenosine modification"/>
    <property type="evidence" value="ECO:0007669"/>
    <property type="project" value="UniProtKB-UniRule"/>
</dbReference>
<dbReference type="CDD" id="cd24133">
    <property type="entry name" value="ASKHA_NBD_TsaD_bac"/>
    <property type="match status" value="1"/>
</dbReference>
<dbReference type="FunFam" id="3.30.420.40:FF:000012">
    <property type="entry name" value="tRNA N6-adenosine threonylcarbamoyltransferase"/>
    <property type="match status" value="1"/>
</dbReference>
<dbReference type="FunFam" id="3.30.420.40:FF:000040">
    <property type="entry name" value="tRNA N6-adenosine threonylcarbamoyltransferase"/>
    <property type="match status" value="1"/>
</dbReference>
<dbReference type="Gene3D" id="3.30.420.40">
    <property type="match status" value="2"/>
</dbReference>
<dbReference type="HAMAP" id="MF_01445">
    <property type="entry name" value="TsaD"/>
    <property type="match status" value="1"/>
</dbReference>
<dbReference type="InterPro" id="IPR043129">
    <property type="entry name" value="ATPase_NBD"/>
</dbReference>
<dbReference type="InterPro" id="IPR000905">
    <property type="entry name" value="Gcp-like_dom"/>
</dbReference>
<dbReference type="InterPro" id="IPR017861">
    <property type="entry name" value="KAE1/TsaD"/>
</dbReference>
<dbReference type="InterPro" id="IPR022450">
    <property type="entry name" value="TsaD"/>
</dbReference>
<dbReference type="NCBIfam" id="TIGR00329">
    <property type="entry name" value="gcp_kae1"/>
    <property type="match status" value="1"/>
</dbReference>
<dbReference type="NCBIfam" id="TIGR03723">
    <property type="entry name" value="T6A_TsaD_YgjD"/>
    <property type="match status" value="1"/>
</dbReference>
<dbReference type="PANTHER" id="PTHR11735">
    <property type="entry name" value="TRNA N6-ADENOSINE THREONYLCARBAMOYLTRANSFERASE"/>
    <property type="match status" value="1"/>
</dbReference>
<dbReference type="PANTHER" id="PTHR11735:SF6">
    <property type="entry name" value="TRNA N6-ADENOSINE THREONYLCARBAMOYLTRANSFERASE, MITOCHONDRIAL"/>
    <property type="match status" value="1"/>
</dbReference>
<dbReference type="Pfam" id="PF00814">
    <property type="entry name" value="TsaD"/>
    <property type="match status" value="1"/>
</dbReference>
<dbReference type="PRINTS" id="PR00789">
    <property type="entry name" value="OSIALOPTASE"/>
</dbReference>
<dbReference type="SUPFAM" id="SSF53067">
    <property type="entry name" value="Actin-like ATPase domain"/>
    <property type="match status" value="2"/>
</dbReference>
<comment type="function">
    <text evidence="1">Required for the formation of a threonylcarbamoyl group on adenosine at position 37 (t(6)A37) in tRNAs that read codons beginning with adenine. Is involved in the transfer of the threonylcarbamoyl moiety of threonylcarbamoyl-AMP (TC-AMP) to the N6 group of A37, together with TsaE and TsaB. TsaD likely plays a direct catalytic role in this reaction.</text>
</comment>
<comment type="catalytic activity">
    <reaction evidence="1">
        <text>L-threonylcarbamoyladenylate + adenosine(37) in tRNA = N(6)-L-threonylcarbamoyladenosine(37) in tRNA + AMP + H(+)</text>
        <dbReference type="Rhea" id="RHEA:37059"/>
        <dbReference type="Rhea" id="RHEA-COMP:10162"/>
        <dbReference type="Rhea" id="RHEA-COMP:10163"/>
        <dbReference type="ChEBI" id="CHEBI:15378"/>
        <dbReference type="ChEBI" id="CHEBI:73682"/>
        <dbReference type="ChEBI" id="CHEBI:74411"/>
        <dbReference type="ChEBI" id="CHEBI:74418"/>
        <dbReference type="ChEBI" id="CHEBI:456215"/>
        <dbReference type="EC" id="2.3.1.234"/>
    </reaction>
</comment>
<comment type="cofactor">
    <cofactor evidence="1">
        <name>Fe(2+)</name>
        <dbReference type="ChEBI" id="CHEBI:29033"/>
    </cofactor>
    <text evidence="1">Binds 1 Fe(2+) ion per subunit.</text>
</comment>
<comment type="subcellular location">
    <subcellularLocation>
        <location evidence="1">Cytoplasm</location>
    </subcellularLocation>
</comment>
<comment type="similarity">
    <text evidence="1">Belongs to the KAE1 / TsaD family.</text>
</comment>
<sequence length="343" mass="35760">MLLLAIESSCDETAAAVVRDGRIILSNIVASQISVHAGYGGVVPEIASRKHLETISTVIEEALQAAGVSLTDVDGIAVTQGPGLAGALLVGISTAKAMAYALGVPIAGVNHIESHILAIFLERSIEFPFVALAVSGGHTHLYLVEAVGRYKTLGQTLDDAAGEAFDKVAKLLGLPYPGGALIDRLAAEGDPEAIRFPRPLMRDESFNFSFSGLKTSVLNYLQKNPAAADGRALNDLCASFQAAVCDVLVSKTAAAVSATGIKRVVVAGGVACNNGLRREMSRLAELKGIELHIPSPLLCSDNAAMIAVPGDYYLSNNILSGFDIDALPVWPLDSIASRLTKGS</sequence>
<organism>
    <name type="scientific">Geotalea uraniireducens (strain Rf4)</name>
    <name type="common">Geobacter uraniireducens</name>
    <dbReference type="NCBI Taxonomy" id="351605"/>
    <lineage>
        <taxon>Bacteria</taxon>
        <taxon>Pseudomonadati</taxon>
        <taxon>Thermodesulfobacteriota</taxon>
        <taxon>Desulfuromonadia</taxon>
        <taxon>Geobacterales</taxon>
        <taxon>Geobacteraceae</taxon>
        <taxon>Geotalea</taxon>
    </lineage>
</organism>
<evidence type="ECO:0000255" key="1">
    <source>
        <dbReference type="HAMAP-Rule" id="MF_01445"/>
    </source>
</evidence>
<feature type="chain" id="PRO_1000087476" description="tRNA N6-adenosine threonylcarbamoyltransferase">
    <location>
        <begin position="1"/>
        <end position="343"/>
    </location>
</feature>
<feature type="binding site" evidence="1">
    <location>
        <position position="111"/>
    </location>
    <ligand>
        <name>Fe cation</name>
        <dbReference type="ChEBI" id="CHEBI:24875"/>
    </ligand>
</feature>
<feature type="binding site" evidence="1">
    <location>
        <position position="115"/>
    </location>
    <ligand>
        <name>Fe cation</name>
        <dbReference type="ChEBI" id="CHEBI:24875"/>
    </ligand>
</feature>
<feature type="binding site" evidence="1">
    <location>
        <begin position="133"/>
        <end position="137"/>
    </location>
    <ligand>
        <name>substrate</name>
    </ligand>
</feature>
<feature type="binding site" evidence="1">
    <location>
        <position position="166"/>
    </location>
    <ligand>
        <name>substrate</name>
    </ligand>
</feature>
<feature type="binding site" evidence="1">
    <location>
        <position position="179"/>
    </location>
    <ligand>
        <name>substrate</name>
    </ligand>
</feature>
<feature type="binding site" evidence="1">
    <location>
        <position position="183"/>
    </location>
    <ligand>
        <name>substrate</name>
    </ligand>
</feature>
<feature type="binding site" evidence="1">
    <location>
        <position position="273"/>
    </location>
    <ligand>
        <name>substrate</name>
    </ligand>
</feature>
<feature type="binding site" evidence="1">
    <location>
        <position position="301"/>
    </location>
    <ligand>
        <name>Fe cation</name>
        <dbReference type="ChEBI" id="CHEBI:24875"/>
    </ligand>
</feature>
<gene>
    <name evidence="1" type="primary">tsaD</name>
    <name type="synonym">gcp</name>
    <name type="ordered locus">Gura_2310</name>
</gene>